<name>PPBT_CHICK</name>
<feature type="signal peptide" evidence="4">
    <location>
        <begin position="1"/>
        <end position="16"/>
    </location>
</feature>
<feature type="chain" id="PRO_0000024029" description="Alkaline phosphatase, tissue-nonspecific isozyme">
    <location>
        <begin position="17"/>
        <end position="498"/>
    </location>
</feature>
<feature type="propeptide" id="PRO_0000024030" description="Removed in mature form" evidence="4">
    <location>
        <begin position="499"/>
        <end position="519"/>
    </location>
</feature>
<feature type="active site" description="Phosphoserine intermediate" evidence="2 5">
    <location>
        <position position="109"/>
    </location>
</feature>
<feature type="binding site" evidence="2">
    <location>
        <position position="59"/>
    </location>
    <ligand>
        <name>Mg(2+)</name>
        <dbReference type="ChEBI" id="CHEBI:18420"/>
    </ligand>
</feature>
<feature type="binding site" evidence="2">
    <location>
        <position position="59"/>
    </location>
    <ligand>
        <name>Zn(2+)</name>
        <dbReference type="ChEBI" id="CHEBI:29105"/>
        <label>1</label>
    </ligand>
</feature>
<feature type="binding site" evidence="2">
    <location>
        <position position="109"/>
    </location>
    <ligand>
        <name>Zn(2+)</name>
        <dbReference type="ChEBI" id="CHEBI:29105"/>
        <label>1</label>
    </ligand>
</feature>
<feature type="binding site" evidence="2">
    <location>
        <position position="172"/>
    </location>
    <ligand>
        <name>Mg(2+)</name>
        <dbReference type="ChEBI" id="CHEBI:18420"/>
    </ligand>
</feature>
<feature type="binding site" evidence="1">
    <location>
        <position position="234"/>
    </location>
    <ligand>
        <name>Ca(2+)</name>
        <dbReference type="ChEBI" id="CHEBI:29108"/>
    </ligand>
</feature>
<feature type="binding site" evidence="1">
    <location>
        <position position="289"/>
    </location>
    <ligand>
        <name>Ca(2+)</name>
        <dbReference type="ChEBI" id="CHEBI:29108"/>
    </ligand>
</feature>
<feature type="binding site" evidence="1">
    <location>
        <position position="290"/>
    </location>
    <ligand>
        <name>Ca(2+)</name>
        <dbReference type="ChEBI" id="CHEBI:29108"/>
    </ligand>
</feature>
<feature type="binding site" evidence="1">
    <location>
        <position position="305"/>
    </location>
    <ligand>
        <name>Ca(2+)</name>
        <dbReference type="ChEBI" id="CHEBI:29108"/>
    </ligand>
</feature>
<feature type="binding site" evidence="2">
    <location>
        <position position="331"/>
    </location>
    <ligand>
        <name>Mg(2+)</name>
        <dbReference type="ChEBI" id="CHEBI:18420"/>
    </ligand>
</feature>
<feature type="binding site" evidence="2">
    <location>
        <position position="336"/>
    </location>
    <ligand>
        <name>Zn(2+)</name>
        <dbReference type="ChEBI" id="CHEBI:29105"/>
        <label>2</label>
    </ligand>
</feature>
<feature type="binding site" evidence="2">
    <location>
        <position position="340"/>
    </location>
    <ligand>
        <name>Zn(2+)</name>
        <dbReference type="ChEBI" id="CHEBI:29105"/>
        <label>2</label>
    </ligand>
</feature>
<feature type="binding site" evidence="2">
    <location>
        <position position="377"/>
    </location>
    <ligand>
        <name>Zn(2+)</name>
        <dbReference type="ChEBI" id="CHEBI:29105"/>
        <label>1</label>
    </ligand>
</feature>
<feature type="binding site" evidence="2">
    <location>
        <position position="378"/>
    </location>
    <ligand>
        <name>Zn(2+)</name>
        <dbReference type="ChEBI" id="CHEBI:29105"/>
        <label>1</label>
    </ligand>
</feature>
<feature type="binding site" evidence="2">
    <location>
        <position position="453"/>
    </location>
    <ligand>
        <name>Zn(2+)</name>
        <dbReference type="ChEBI" id="CHEBI:29105"/>
        <label>2</label>
    </ligand>
</feature>
<feature type="lipid moiety-binding region" description="GPI-anchor amidated serine" evidence="4">
    <location>
        <position position="498"/>
    </location>
</feature>
<feature type="glycosylation site" description="N-linked (GlcNAc...) asparagine" evidence="4">
    <location>
        <position position="139"/>
    </location>
</feature>
<feature type="glycosylation site" description="N-linked (GlcNAc...) asparagine" evidence="4">
    <location>
        <position position="229"/>
    </location>
</feature>
<feature type="glycosylation site" description="N-linked (GlcNAc...) asparagine" evidence="4">
    <location>
        <position position="278"/>
    </location>
</feature>
<feature type="glycosylation site" description="N-linked (GlcNAc...) asparagine" evidence="4">
    <location>
        <position position="302"/>
    </location>
</feature>
<feature type="glycosylation site" description="N-linked (GlcNAc...) asparagine" evidence="4">
    <location>
        <position position="429"/>
    </location>
</feature>
<feature type="disulfide bond" evidence="2">
    <location>
        <begin position="138"/>
        <end position="200"/>
    </location>
</feature>
<feature type="disulfide bond" evidence="2">
    <location>
        <begin position="488"/>
        <end position="496"/>
    </location>
</feature>
<keyword id="KW-0091">Biomineralization</keyword>
<keyword id="KW-0106">Calcium</keyword>
<keyword id="KW-1003">Cell membrane</keyword>
<keyword id="KW-1015">Disulfide bond</keyword>
<keyword id="KW-0325">Glycoprotein</keyword>
<keyword id="KW-0336">GPI-anchor</keyword>
<keyword id="KW-0378">Hydrolase</keyword>
<keyword id="KW-0449">Lipoprotein</keyword>
<keyword id="KW-0460">Magnesium</keyword>
<keyword id="KW-0472">Membrane</keyword>
<keyword id="KW-0479">Metal-binding</keyword>
<keyword id="KW-0597">Phosphoprotein</keyword>
<keyword id="KW-1185">Reference proteome</keyword>
<keyword id="KW-0732">Signal</keyword>
<keyword id="KW-0862">Zinc</keyword>
<sequence>MKAFLLTLLAQLCSASLVPEREKDPEYWRQQAQETLRDALRLQHLNQNVAKNLILFLGDGMGVSTVTAARILKGQLQHRKGEESLLEMDKFPYVALAKTYNTNAQVPDSAGTATAYLCGVKANEGTVGVSAGVTRDRCNTTKGQEVTSILRWAKDEGKAVGIVTTTRVTHATPSAAYAHSANRDWYSDGEMPLDALEGGCKDIARQLVDNIPDIEVILGGGRKYMFPKNTSDVEYPQEERHRGTRLDGKDLVQAWHDTKPAGKVAKYVWHRRELLALNVSRVDFLLGLFEPGDMVYELDRNNETDPSLSEMVAVAIRMLQKNPRGFFLLVEGGRIDHGHHEGKAKQALHEAVELDRAVGLAGRLTSPRDTLSVVTADHSHVFTFGGYTPRGNPIFGLAPMQSDVDRKPFTSILYGNGPGYKIVGGERENVSAVDFAHANYQAQAAVPLRQETHGGEDVAVFARGPMAHLLHGVDEQNYIPHAMAYAACIGPNRAHCSSAARPAATATLLPVLLLLLLLC</sequence>
<gene>
    <name type="primary">ALPL</name>
</gene>
<reference key="1">
    <citation type="journal article" date="1995" name="Dev. Dyn.">
        <title>Tissue-nonspecific alkaline phosphatase participates in the establishment and growth of feather germs in embryonic chick skin cultures.</title>
        <authorList>
            <person name="Crawford K."/>
            <person name="Weissig H."/>
            <person name="Binette F."/>
            <person name="Millan J.L."/>
            <person name="Goetinck P.F."/>
        </authorList>
    </citation>
    <scope>NUCLEOTIDE SEQUENCE [MRNA]</scope>
    <scope>FUNCTION</scope>
    <scope>TISSUE SPECIFICITY</scope>
</reference>
<reference key="2">
    <citation type="journal article" date="2010" name="Biochem. Biophys. Res. Commun.">
        <title>Active creatine kinase is present in matrix vesicles isolated from femurs of chicken embryo: Implications for bone mineralization.</title>
        <authorList>
            <person name="Sekrecka-Belniak A."/>
            <person name="Balcerzak M."/>
            <person name="Buchet R."/>
            <person name="Pikula S."/>
        </authorList>
    </citation>
    <scope>CATALYTIC ACTIVITY</scope>
</reference>
<comment type="function">
    <text evidence="1 3 7">Alkaline phosphatase that metabolizes various phosphate compounds and plays a key role in skeletal mineralization and adaptive thermogenesis (By similarity). Has broad substrate specificity and can hydrolyze a considerable variety of compounds: however, only a few substrates, such as diphosphate (inorganic pyrophosphate; PPi) and pyridoxal 5'-phosphate (PLP) are natural substrates (By similarity). Plays an essential role in skeletal and dental mineralization via its ability to hydrolyze extracellular diphosphate, a potent mineralization inhibitor, to phosphate: it thereby promotes hydroxyapatite crystal formation and increases inorganic phosphate concentration (By similarity). Catalyzes dephosphorylation of PLP to pyridoxal (PL), the transportable form of vitamin B6, in order to provide a sufficient amount of PLP in the brain, an essential cofactor for enzymes catalyzing the synthesis of diverse neurotransmitters (By similarity). Additionally, also able to mediate ATP degradation in a stepwise manner to adenosine, thereby regulating the availability of ligands for purinergic receptors (By similarity). Involved in the establishment and growth of feather germs (PubMed:8563025).</text>
</comment>
<comment type="catalytic activity">
    <reaction evidence="5 6">
        <text>a phosphate monoester + H2O = an alcohol + phosphate</text>
        <dbReference type="Rhea" id="RHEA:15017"/>
        <dbReference type="ChEBI" id="CHEBI:15377"/>
        <dbReference type="ChEBI" id="CHEBI:30879"/>
        <dbReference type="ChEBI" id="CHEBI:43474"/>
        <dbReference type="ChEBI" id="CHEBI:67140"/>
        <dbReference type="EC" id="3.1.3.1"/>
    </reaction>
    <physiologicalReaction direction="left-to-right" evidence="6">
        <dbReference type="Rhea" id="RHEA:15018"/>
    </physiologicalReaction>
</comment>
<comment type="catalytic activity">
    <reaction evidence="1">
        <text>diphosphate + H2O = 2 phosphate + H(+)</text>
        <dbReference type="Rhea" id="RHEA:24576"/>
        <dbReference type="ChEBI" id="CHEBI:15377"/>
        <dbReference type="ChEBI" id="CHEBI:15378"/>
        <dbReference type="ChEBI" id="CHEBI:33019"/>
        <dbReference type="ChEBI" id="CHEBI:43474"/>
    </reaction>
    <physiologicalReaction direction="left-to-right" evidence="1">
        <dbReference type="Rhea" id="RHEA:24577"/>
    </physiologicalReaction>
</comment>
<comment type="catalytic activity">
    <reaction evidence="1">
        <text>pyridoxal 5'-phosphate + H2O = pyridoxal + phosphate</text>
        <dbReference type="Rhea" id="RHEA:20533"/>
        <dbReference type="ChEBI" id="CHEBI:15377"/>
        <dbReference type="ChEBI" id="CHEBI:17310"/>
        <dbReference type="ChEBI" id="CHEBI:43474"/>
        <dbReference type="ChEBI" id="CHEBI:597326"/>
    </reaction>
    <physiologicalReaction direction="left-to-right" evidence="1">
        <dbReference type="Rhea" id="RHEA:20534"/>
    </physiologicalReaction>
</comment>
<comment type="catalytic activity">
    <reaction evidence="1">
        <text>phosphoethanolamine + H2O = ethanolamine + phosphate</text>
        <dbReference type="Rhea" id="RHEA:16089"/>
        <dbReference type="ChEBI" id="CHEBI:15377"/>
        <dbReference type="ChEBI" id="CHEBI:43474"/>
        <dbReference type="ChEBI" id="CHEBI:57603"/>
        <dbReference type="ChEBI" id="CHEBI:58190"/>
    </reaction>
    <physiologicalReaction direction="left-to-right" evidence="1">
        <dbReference type="Rhea" id="RHEA:16090"/>
    </physiologicalReaction>
</comment>
<comment type="catalytic activity">
    <reaction evidence="3">
        <text>ATP + H2O = ADP + phosphate + H(+)</text>
        <dbReference type="Rhea" id="RHEA:13065"/>
        <dbReference type="ChEBI" id="CHEBI:15377"/>
        <dbReference type="ChEBI" id="CHEBI:15378"/>
        <dbReference type="ChEBI" id="CHEBI:30616"/>
        <dbReference type="ChEBI" id="CHEBI:43474"/>
        <dbReference type="ChEBI" id="CHEBI:456216"/>
    </reaction>
    <physiologicalReaction direction="left-to-right" evidence="3">
        <dbReference type="Rhea" id="RHEA:13066"/>
    </physiologicalReaction>
</comment>
<comment type="catalytic activity">
    <reaction evidence="3">
        <text>ADP + H2O = AMP + phosphate + H(+)</text>
        <dbReference type="Rhea" id="RHEA:61436"/>
        <dbReference type="ChEBI" id="CHEBI:15377"/>
        <dbReference type="ChEBI" id="CHEBI:15378"/>
        <dbReference type="ChEBI" id="CHEBI:43474"/>
        <dbReference type="ChEBI" id="CHEBI:456215"/>
        <dbReference type="ChEBI" id="CHEBI:456216"/>
    </reaction>
    <physiologicalReaction direction="left-to-right" evidence="3">
        <dbReference type="Rhea" id="RHEA:61437"/>
    </physiologicalReaction>
</comment>
<comment type="catalytic activity">
    <reaction evidence="3">
        <text>AMP + H2O = adenosine + phosphate</text>
        <dbReference type="Rhea" id="RHEA:29375"/>
        <dbReference type="ChEBI" id="CHEBI:15377"/>
        <dbReference type="ChEBI" id="CHEBI:16335"/>
        <dbReference type="ChEBI" id="CHEBI:43474"/>
        <dbReference type="ChEBI" id="CHEBI:456215"/>
    </reaction>
    <physiologicalReaction direction="left-to-right" evidence="3">
        <dbReference type="Rhea" id="RHEA:29376"/>
    </physiologicalReaction>
</comment>
<comment type="cofactor">
    <cofactor evidence="2">
        <name>Mg(2+)</name>
        <dbReference type="ChEBI" id="CHEBI:18420"/>
    </cofactor>
    <text evidence="2">Binds 1 Mg(2+) ion.</text>
</comment>
<comment type="cofactor">
    <cofactor evidence="1">
        <name>Zn(2+)</name>
        <dbReference type="ChEBI" id="CHEBI:29105"/>
    </cofactor>
    <text evidence="1">Binds 2 Zn(2+) ions.</text>
</comment>
<comment type="cofactor">
    <cofactor evidence="1">
        <name>Ca(2+)</name>
        <dbReference type="ChEBI" id="CHEBI:29108"/>
    </cofactor>
</comment>
<comment type="subunit">
    <text evidence="1">Homodimer.</text>
</comment>
<comment type="subcellular location">
    <subcellularLocation>
        <location evidence="1">Cell membrane</location>
        <topology evidence="1">Lipid-anchor</topology>
        <topology evidence="1">GPI-anchor</topology>
    </subcellularLocation>
    <subcellularLocation>
        <location evidence="3">Extracellular vesicle membrane</location>
        <topology evidence="3">Lipid-anchor</topology>
        <topology evidence="3">GPI-anchor</topology>
    </subcellularLocation>
    <text evidence="3">Localizes to special class of extracellular vesicles, named matrix vesicles (MVs), which are released by osteogenic cells.</text>
</comment>
<comment type="domain">
    <text evidence="1">Calcium-binding is structural and does not influence the alkaline phosphatase activity. At very high concentrations, calcium can however substitute for zinc at zinc-binding sites, leading to strongly reduced enzyme activity.</text>
</comment>
<comment type="similarity">
    <text evidence="9">Belongs to the alkaline phosphatase family.</text>
</comment>
<evidence type="ECO:0000250" key="1">
    <source>
        <dbReference type="UniProtKB" id="P05186"/>
    </source>
</evidence>
<evidence type="ECO:0000250" key="2">
    <source>
        <dbReference type="UniProtKB" id="P05187"/>
    </source>
</evidence>
<evidence type="ECO:0000250" key="3">
    <source>
        <dbReference type="UniProtKB" id="P09242"/>
    </source>
</evidence>
<evidence type="ECO:0000255" key="4"/>
<evidence type="ECO:0000255" key="5">
    <source>
        <dbReference type="PROSITE-ProRule" id="PRU10042"/>
    </source>
</evidence>
<evidence type="ECO:0000269" key="6">
    <source>
    </source>
</evidence>
<evidence type="ECO:0000269" key="7">
    <source>
    </source>
</evidence>
<evidence type="ECO:0000303" key="8">
    <source>
    </source>
</evidence>
<evidence type="ECO:0000305" key="9"/>
<accession>Q92058</accession>
<protein>
    <recommendedName>
        <fullName evidence="8">Alkaline phosphatase, tissue-nonspecific isozyme</fullName>
        <shortName>AP-TNAP</shortName>
        <shortName>TNSALP</shortName>
        <ecNumber evidence="6">3.1.3.1</ecNumber>
    </recommendedName>
    <alternativeName>
        <fullName evidence="9">Phosphoamidase</fullName>
    </alternativeName>
</protein>
<proteinExistence type="evidence at protein level"/>
<organism>
    <name type="scientific">Gallus gallus</name>
    <name type="common">Chicken</name>
    <dbReference type="NCBI Taxonomy" id="9031"/>
    <lineage>
        <taxon>Eukaryota</taxon>
        <taxon>Metazoa</taxon>
        <taxon>Chordata</taxon>
        <taxon>Craniata</taxon>
        <taxon>Vertebrata</taxon>
        <taxon>Euteleostomi</taxon>
        <taxon>Archelosauria</taxon>
        <taxon>Archosauria</taxon>
        <taxon>Dinosauria</taxon>
        <taxon>Saurischia</taxon>
        <taxon>Theropoda</taxon>
        <taxon>Coelurosauria</taxon>
        <taxon>Aves</taxon>
        <taxon>Neognathae</taxon>
        <taxon>Galloanserae</taxon>
        <taxon>Galliformes</taxon>
        <taxon>Phasianidae</taxon>
        <taxon>Phasianinae</taxon>
        <taxon>Gallus</taxon>
    </lineage>
</organism>
<dbReference type="EC" id="3.1.3.1" evidence="6"/>
<dbReference type="EMBL" id="U19108">
    <property type="protein sequence ID" value="AAA92562.1"/>
    <property type="molecule type" value="mRNA"/>
</dbReference>
<dbReference type="RefSeq" id="NP_990691.1">
    <property type="nucleotide sequence ID" value="NM_205360.1"/>
</dbReference>
<dbReference type="SMR" id="Q92058"/>
<dbReference type="FunCoup" id="Q92058">
    <property type="interactions" value="63"/>
</dbReference>
<dbReference type="STRING" id="9031.ENSGALP00000038334"/>
<dbReference type="GlyCosmos" id="Q92058">
    <property type="glycosylation" value="5 sites, No reported glycans"/>
</dbReference>
<dbReference type="GlyGen" id="Q92058">
    <property type="glycosylation" value="5 sites"/>
</dbReference>
<dbReference type="GeneID" id="396317"/>
<dbReference type="KEGG" id="gga:396317"/>
<dbReference type="CTD" id="249"/>
<dbReference type="VEuPathDB" id="HostDB:geneid_396317"/>
<dbReference type="InParanoid" id="Q92058"/>
<dbReference type="OrthoDB" id="5818554at2759"/>
<dbReference type="PhylomeDB" id="Q92058"/>
<dbReference type="BRENDA" id="3.1.3.1">
    <property type="organism ID" value="1306"/>
</dbReference>
<dbReference type="PRO" id="PR:Q92058"/>
<dbReference type="Proteomes" id="UP000000539">
    <property type="component" value="Unassembled WGS sequence"/>
</dbReference>
<dbReference type="GO" id="GO:0065010">
    <property type="term" value="C:extracellular membrane-bounded organelle"/>
    <property type="evidence" value="ECO:0000314"/>
    <property type="project" value="AgBase"/>
</dbReference>
<dbReference type="GO" id="GO:0005758">
    <property type="term" value="C:mitochondrial intermembrane space"/>
    <property type="evidence" value="ECO:0000250"/>
    <property type="project" value="UniProtKB"/>
</dbReference>
<dbReference type="GO" id="GO:0005886">
    <property type="term" value="C:plasma membrane"/>
    <property type="evidence" value="ECO:0000318"/>
    <property type="project" value="GO_Central"/>
</dbReference>
<dbReference type="GO" id="GO:0098552">
    <property type="term" value="C:side of membrane"/>
    <property type="evidence" value="ECO:0007669"/>
    <property type="project" value="UniProtKB-KW"/>
</dbReference>
<dbReference type="GO" id="GO:0043262">
    <property type="term" value="F:ADP phosphatase activity"/>
    <property type="evidence" value="ECO:0007669"/>
    <property type="project" value="RHEA"/>
</dbReference>
<dbReference type="GO" id="GO:0004035">
    <property type="term" value="F:alkaline phosphatase activity"/>
    <property type="evidence" value="ECO:0000314"/>
    <property type="project" value="AgBase"/>
</dbReference>
<dbReference type="GO" id="GO:0016887">
    <property type="term" value="F:ATP hydrolysis activity"/>
    <property type="evidence" value="ECO:0007669"/>
    <property type="project" value="RHEA"/>
</dbReference>
<dbReference type="GO" id="GO:0005509">
    <property type="term" value="F:calcium ion binding"/>
    <property type="evidence" value="ECO:0000250"/>
    <property type="project" value="UniProtKB"/>
</dbReference>
<dbReference type="GO" id="GO:0004427">
    <property type="term" value="F:inorganic diphosphate phosphatase activity"/>
    <property type="evidence" value="ECO:0007669"/>
    <property type="project" value="RHEA"/>
</dbReference>
<dbReference type="GO" id="GO:0050187">
    <property type="term" value="F:phosphoamidase activity"/>
    <property type="evidence" value="ECO:0000250"/>
    <property type="project" value="UniProtKB"/>
</dbReference>
<dbReference type="GO" id="GO:0052732">
    <property type="term" value="F:phosphoethanolamine phosphatase activity"/>
    <property type="evidence" value="ECO:0007669"/>
    <property type="project" value="RHEA"/>
</dbReference>
<dbReference type="GO" id="GO:0033883">
    <property type="term" value="F:pyridoxal phosphatase activity"/>
    <property type="evidence" value="ECO:0000250"/>
    <property type="project" value="UniProtKB"/>
</dbReference>
<dbReference type="GO" id="GO:0016462">
    <property type="term" value="F:pyrophosphatase activity"/>
    <property type="evidence" value="ECO:0000250"/>
    <property type="project" value="UniProtKB"/>
</dbReference>
<dbReference type="GO" id="GO:0031214">
    <property type="term" value="P:biomineral tissue development"/>
    <property type="evidence" value="ECO:0000318"/>
    <property type="project" value="GO_Central"/>
</dbReference>
<dbReference type="GO" id="GO:0030282">
    <property type="term" value="P:bone mineralization"/>
    <property type="evidence" value="ECO:0000250"/>
    <property type="project" value="UniProtKB"/>
</dbReference>
<dbReference type="GO" id="GO:0120162">
    <property type="term" value="P:positive regulation of cold-induced thermogenesis"/>
    <property type="evidence" value="ECO:0000250"/>
    <property type="project" value="UniProtKB"/>
</dbReference>
<dbReference type="CDD" id="cd16012">
    <property type="entry name" value="ALP"/>
    <property type="match status" value="1"/>
</dbReference>
<dbReference type="FunFam" id="3.40.720.10:FF:000008">
    <property type="entry name" value="Alkaline phosphatase"/>
    <property type="match status" value="1"/>
</dbReference>
<dbReference type="Gene3D" id="3.40.720.10">
    <property type="entry name" value="Alkaline Phosphatase, subunit A"/>
    <property type="match status" value="1"/>
</dbReference>
<dbReference type="InterPro" id="IPR001952">
    <property type="entry name" value="Alkaline_phosphatase"/>
</dbReference>
<dbReference type="InterPro" id="IPR018299">
    <property type="entry name" value="Alkaline_phosphatase_AS"/>
</dbReference>
<dbReference type="InterPro" id="IPR017850">
    <property type="entry name" value="Alkaline_phosphatase_core_sf"/>
</dbReference>
<dbReference type="PANTHER" id="PTHR11596">
    <property type="entry name" value="ALKALINE PHOSPHATASE"/>
    <property type="match status" value="1"/>
</dbReference>
<dbReference type="PANTHER" id="PTHR11596:SF74">
    <property type="entry name" value="ALKALINE PHOSPHATASE, TISSUE-NONSPECIFIC ISOZYME"/>
    <property type="match status" value="1"/>
</dbReference>
<dbReference type="Pfam" id="PF00245">
    <property type="entry name" value="Alk_phosphatase"/>
    <property type="match status" value="1"/>
</dbReference>
<dbReference type="PRINTS" id="PR00113">
    <property type="entry name" value="ALKPHPHTASE"/>
</dbReference>
<dbReference type="SMART" id="SM00098">
    <property type="entry name" value="alkPPc"/>
    <property type="match status" value="1"/>
</dbReference>
<dbReference type="SUPFAM" id="SSF53649">
    <property type="entry name" value="Alkaline phosphatase-like"/>
    <property type="match status" value="1"/>
</dbReference>
<dbReference type="PROSITE" id="PS00123">
    <property type="entry name" value="ALKALINE_PHOSPHATASE"/>
    <property type="match status" value="1"/>
</dbReference>